<name>MRP10_EREGS</name>
<protein>
    <recommendedName>
        <fullName evidence="3">Small ribosomal subunit protein mS37</fullName>
    </recommendedName>
    <alternativeName>
        <fullName>37S ribosomal protein MRP10, mitochondrial</fullName>
    </alternativeName>
    <alternativeName>
        <fullName>Mitochondrial ribosomal protein 10</fullName>
    </alternativeName>
</protein>
<keyword id="KW-1015">Disulfide bond</keyword>
<keyword id="KW-0496">Mitochondrion</keyword>
<keyword id="KW-1185">Reference proteome</keyword>
<keyword id="KW-0687">Ribonucleoprotein</keyword>
<keyword id="KW-0689">Ribosomal protein</keyword>
<dbReference type="EMBL" id="AE016818">
    <property type="protein sequence ID" value="AAS52880.1"/>
    <property type="molecule type" value="Genomic_DNA"/>
</dbReference>
<dbReference type="RefSeq" id="NP_985056.1">
    <property type="nucleotide sequence ID" value="NM_210410.1"/>
</dbReference>
<dbReference type="SMR" id="Q756Q5"/>
<dbReference type="FunCoup" id="Q756Q5">
    <property type="interactions" value="127"/>
</dbReference>
<dbReference type="STRING" id="284811.Q756Q5"/>
<dbReference type="EnsemblFungi" id="AAS52880">
    <property type="protein sequence ID" value="AAS52880"/>
    <property type="gene ID" value="AGOS_AER199C"/>
</dbReference>
<dbReference type="GeneID" id="4621266"/>
<dbReference type="KEGG" id="ago:AGOS_AER199C"/>
<dbReference type="eggNOG" id="ENOG502SBQ7">
    <property type="taxonomic scope" value="Eukaryota"/>
</dbReference>
<dbReference type="HOGENOM" id="CLU_162186_0_0_1"/>
<dbReference type="InParanoid" id="Q756Q5"/>
<dbReference type="OMA" id="INYHAAR"/>
<dbReference type="OrthoDB" id="2210at2759"/>
<dbReference type="Proteomes" id="UP000000591">
    <property type="component" value="Chromosome V"/>
</dbReference>
<dbReference type="GO" id="GO:0005763">
    <property type="term" value="C:mitochondrial small ribosomal subunit"/>
    <property type="evidence" value="ECO:0000318"/>
    <property type="project" value="GO_Central"/>
</dbReference>
<dbReference type="GO" id="GO:0003735">
    <property type="term" value="F:structural constituent of ribosome"/>
    <property type="evidence" value="ECO:0000318"/>
    <property type="project" value="GO_Central"/>
</dbReference>
<dbReference type="GO" id="GO:0032543">
    <property type="term" value="P:mitochondrial translation"/>
    <property type="evidence" value="ECO:0000318"/>
    <property type="project" value="GO_Central"/>
</dbReference>
<dbReference type="InterPro" id="IPR010625">
    <property type="entry name" value="CHCH"/>
</dbReference>
<dbReference type="InterPro" id="IPR017264">
    <property type="entry name" value="Ribosomal_mS37_fun"/>
</dbReference>
<dbReference type="PANTHER" id="PTHR28066">
    <property type="entry name" value="37S RIBOSOMAL PROTEIN MRP10, MITOCHONDRIAL"/>
    <property type="match status" value="1"/>
</dbReference>
<dbReference type="PANTHER" id="PTHR28066:SF1">
    <property type="entry name" value="SMALL RIBOSOMAL SUBUNIT PROTEIN MS37"/>
    <property type="match status" value="1"/>
</dbReference>
<dbReference type="Pfam" id="PF06747">
    <property type="entry name" value="CHCH"/>
    <property type="match status" value="1"/>
</dbReference>
<dbReference type="PIRSF" id="PIRSF037706">
    <property type="entry name" value="MRP10"/>
    <property type="match status" value="1"/>
</dbReference>
<dbReference type="PROSITE" id="PS51808">
    <property type="entry name" value="CHCH"/>
    <property type="match status" value="1"/>
</dbReference>
<organism>
    <name type="scientific">Eremothecium gossypii (strain ATCC 10895 / CBS 109.51 / FGSC 9923 / NRRL Y-1056)</name>
    <name type="common">Yeast</name>
    <name type="synonym">Ashbya gossypii</name>
    <dbReference type="NCBI Taxonomy" id="284811"/>
    <lineage>
        <taxon>Eukaryota</taxon>
        <taxon>Fungi</taxon>
        <taxon>Dikarya</taxon>
        <taxon>Ascomycota</taxon>
        <taxon>Saccharomycotina</taxon>
        <taxon>Saccharomycetes</taxon>
        <taxon>Saccharomycetales</taxon>
        <taxon>Saccharomycetaceae</taxon>
        <taxon>Eremothecium</taxon>
    </lineage>
</organism>
<gene>
    <name type="primary">MRP10</name>
    <name type="ordered locus">AER199C</name>
</gene>
<feature type="chain" id="PRO_0000042817" description="Small ribosomal subunit protein mS37">
    <location>
        <begin position="1"/>
        <end position="95"/>
    </location>
</feature>
<feature type="domain" description="CHCH" evidence="2">
    <location>
        <begin position="27"/>
        <end position="69"/>
    </location>
</feature>
<feature type="short sequence motif" description="Cx9C motif 1" evidence="2">
    <location>
        <begin position="30"/>
        <end position="40"/>
    </location>
</feature>
<feature type="short sequence motif" description="Cx9C motif 2" evidence="2">
    <location>
        <begin position="51"/>
        <end position="61"/>
    </location>
</feature>
<feature type="disulfide bond" evidence="2">
    <location>
        <begin position="30"/>
        <end position="61"/>
    </location>
</feature>
<feature type="disulfide bond" evidence="2">
    <location>
        <begin position="40"/>
        <end position="51"/>
    </location>
</feature>
<accession>Q756Q5</accession>
<proteinExistence type="inferred from homology"/>
<evidence type="ECO:0000250" key="1"/>
<evidence type="ECO:0000255" key="2">
    <source>
        <dbReference type="PROSITE-ProRule" id="PRU01150"/>
    </source>
</evidence>
<evidence type="ECO:0000305" key="3"/>
<sequence>MPGRTPTYKLPPLPRLKVKKPVIKQEANRCLVLMSNLLQCWSSNGHMNPVCEKLATDLKACTSQNVMGSNQKPRKSTINYHAARLYDRISGKPHD</sequence>
<comment type="function">
    <text evidence="1">Involved in mitochondrial genome encoded proteins translation.</text>
</comment>
<comment type="subunit">
    <text evidence="1">Component of the mitochondrial small ribosomal subunit.</text>
</comment>
<comment type="subcellular location">
    <subcellularLocation>
        <location evidence="1">Mitochondrion</location>
    </subcellularLocation>
</comment>
<comment type="similarity">
    <text evidence="3">Belongs to the mitochondrion-specific ribosomal protein mS37 family.</text>
</comment>
<reference key="1">
    <citation type="journal article" date="2004" name="Science">
        <title>The Ashbya gossypii genome as a tool for mapping the ancient Saccharomyces cerevisiae genome.</title>
        <authorList>
            <person name="Dietrich F.S."/>
            <person name="Voegeli S."/>
            <person name="Brachat S."/>
            <person name="Lerch A."/>
            <person name="Gates K."/>
            <person name="Steiner S."/>
            <person name="Mohr C."/>
            <person name="Poehlmann R."/>
            <person name="Luedi P."/>
            <person name="Choi S."/>
            <person name="Wing R.A."/>
            <person name="Flavier A."/>
            <person name="Gaffney T.D."/>
            <person name="Philippsen P."/>
        </authorList>
    </citation>
    <scope>NUCLEOTIDE SEQUENCE [LARGE SCALE GENOMIC DNA]</scope>
    <source>
        <strain>ATCC 10895 / CBS 109.51 / FGSC 9923 / NRRL Y-1056</strain>
    </source>
</reference>
<reference key="2">
    <citation type="journal article" date="2013" name="G3 (Bethesda)">
        <title>Genomes of Ashbya fungi isolated from insects reveal four mating-type loci, numerous translocations, lack of transposons, and distinct gene duplications.</title>
        <authorList>
            <person name="Dietrich F.S."/>
            <person name="Voegeli S."/>
            <person name="Kuo S."/>
            <person name="Philippsen P."/>
        </authorList>
    </citation>
    <scope>GENOME REANNOTATION</scope>
    <source>
        <strain>ATCC 10895 / CBS 109.51 / FGSC 9923 / NRRL Y-1056</strain>
    </source>
</reference>